<reference key="1">
    <citation type="journal article" date="2008" name="FEMS Yeast Res.">
        <title>Promiscuous DNA in the nuclear genomes of hemiascomycetous yeasts.</title>
        <authorList>
            <person name="Sacerdot C."/>
            <person name="Casaregola S."/>
            <person name="Lafontaine I."/>
            <person name="Tekaia F."/>
            <person name="Dujon B."/>
            <person name="Ozier-Kalogeropoulos O."/>
        </authorList>
    </citation>
    <scope>NUCLEOTIDE SEQUENCE [LARGE SCALE GENOMIC DNA]</scope>
    <source>
        <strain>ATCC 36239 / CBS 767 / BCRC 21394 / JCM 1990 / NBRC 0083 / IGC 2968</strain>
    </source>
</reference>
<evidence type="ECO:0000250" key="1"/>
<evidence type="ECO:0000255" key="2"/>
<evidence type="ECO:0000305" key="3"/>
<gene>
    <name type="primary">ND2</name>
</gene>
<keyword id="KW-0249">Electron transport</keyword>
<keyword id="KW-0472">Membrane</keyword>
<keyword id="KW-0496">Mitochondrion</keyword>
<keyword id="KW-0999">Mitochondrion inner membrane</keyword>
<keyword id="KW-0520">NAD</keyword>
<keyword id="KW-1185">Reference proteome</keyword>
<keyword id="KW-0679">Respiratory chain</keyword>
<keyword id="KW-1278">Translocase</keyword>
<keyword id="KW-0812">Transmembrane</keyword>
<keyword id="KW-1133">Transmembrane helix</keyword>
<keyword id="KW-0813">Transport</keyword>
<keyword id="KW-0830">Ubiquinone</keyword>
<accession>A9RAG4</accession>
<dbReference type="EC" id="7.1.1.2"/>
<dbReference type="EMBL" id="DQ508940">
    <property type="protein sequence ID" value="ABF58065.1"/>
    <property type="molecule type" value="Genomic_DNA"/>
</dbReference>
<dbReference type="RefSeq" id="YP_001621416.1">
    <property type="nucleotide sequence ID" value="NC_010166.1"/>
</dbReference>
<dbReference type="SMR" id="A9RAG4"/>
<dbReference type="STRING" id="284592.A9RAG4"/>
<dbReference type="GeneID" id="5845842"/>
<dbReference type="KEGG" id="dha:ND2"/>
<dbReference type="InParanoid" id="A9RAG4"/>
<dbReference type="Proteomes" id="UP000000599">
    <property type="component" value="Mitochondrion"/>
</dbReference>
<dbReference type="GO" id="GO:0005743">
    <property type="term" value="C:mitochondrial inner membrane"/>
    <property type="evidence" value="ECO:0007669"/>
    <property type="project" value="UniProtKB-SubCell"/>
</dbReference>
<dbReference type="GO" id="GO:0008137">
    <property type="term" value="F:NADH dehydrogenase (ubiquinone) activity"/>
    <property type="evidence" value="ECO:0007669"/>
    <property type="project" value="UniProtKB-EC"/>
</dbReference>
<dbReference type="InterPro" id="IPR001750">
    <property type="entry name" value="ND/Mrp_TM"/>
</dbReference>
<dbReference type="PANTHER" id="PTHR22773">
    <property type="entry name" value="NADH DEHYDROGENASE"/>
    <property type="match status" value="1"/>
</dbReference>
<dbReference type="Pfam" id="PF00361">
    <property type="entry name" value="Proton_antipo_M"/>
    <property type="match status" value="1"/>
</dbReference>
<feature type="chain" id="PRO_0000355051" description="NADH-ubiquinone oxidoreductase chain 2">
    <location>
        <begin position="1"/>
        <end position="450"/>
    </location>
</feature>
<feature type="transmembrane region" description="Helical" evidence="2">
    <location>
        <begin position="25"/>
        <end position="45"/>
    </location>
</feature>
<feature type="transmembrane region" description="Helical" evidence="2">
    <location>
        <begin position="58"/>
        <end position="78"/>
    </location>
</feature>
<feature type="transmembrane region" description="Helical" evidence="2">
    <location>
        <begin position="90"/>
        <end position="110"/>
    </location>
</feature>
<feature type="transmembrane region" description="Helical" evidence="2">
    <location>
        <begin position="113"/>
        <end position="133"/>
    </location>
</feature>
<feature type="transmembrane region" description="Helical" evidence="2">
    <location>
        <begin position="145"/>
        <end position="165"/>
    </location>
</feature>
<feature type="transmembrane region" description="Helical" evidence="2">
    <location>
        <begin position="186"/>
        <end position="206"/>
    </location>
</feature>
<feature type="transmembrane region" description="Helical" evidence="2">
    <location>
        <begin position="219"/>
        <end position="239"/>
    </location>
</feature>
<feature type="transmembrane region" description="Helical" evidence="2">
    <location>
        <begin position="248"/>
        <end position="268"/>
    </location>
</feature>
<feature type="transmembrane region" description="Helical" evidence="2">
    <location>
        <begin position="272"/>
        <end position="292"/>
    </location>
</feature>
<feature type="transmembrane region" description="Helical" evidence="2">
    <location>
        <begin position="295"/>
        <end position="315"/>
    </location>
</feature>
<feature type="transmembrane region" description="Helical" evidence="2">
    <location>
        <begin position="344"/>
        <end position="364"/>
    </location>
</feature>
<feature type="transmembrane region" description="Helical" evidence="2">
    <location>
        <begin position="385"/>
        <end position="405"/>
    </location>
</feature>
<feature type="transmembrane region" description="Helical" evidence="2">
    <location>
        <begin position="414"/>
        <end position="436"/>
    </location>
</feature>
<organism>
    <name type="scientific">Debaryomyces hansenii (strain ATCC 36239 / CBS 767 / BCRC 21394 / JCM 1990 / NBRC 0083 / IGC 2968)</name>
    <name type="common">Yeast</name>
    <name type="synonym">Torulaspora hansenii</name>
    <dbReference type="NCBI Taxonomy" id="284592"/>
    <lineage>
        <taxon>Eukaryota</taxon>
        <taxon>Fungi</taxon>
        <taxon>Dikarya</taxon>
        <taxon>Ascomycota</taxon>
        <taxon>Saccharomycotina</taxon>
        <taxon>Pichiomycetes</taxon>
        <taxon>Debaryomycetaceae</taxon>
        <taxon>Debaryomyces</taxon>
    </lineage>
</organism>
<name>NU2M_DEBHA</name>
<sequence length="450" mass="51140">MTFTAFTMFLVFSTFSQSMMVNRTGTITIMFTTMLFFLSMDIVAMSPGMTLFNNWFNLTPYNLPLSFLMLSLIVMLLMYSTSNHRYDLKSPFYLLLLLTNMMGLLLFPLVNDLIALYVVMELQSYSLYLLTGLHSRSYNSSRASLLYFLMGGVASTIMLLASYFVYALTGTTNLSDMAMFYSYSNAFDYFDILLVALLFKMGMAPLHRWSIAVYNYAPTYITAYISMVAKMSMVSWIFANANLFHHHVTILFFYISLAMAAYKPLFQVNIKTMLAYSGMLNFSYILLSMMSYDPAFYIYMIQYVLTHLILFLGMLGASQYVNSPISIWSPLTFMHQLKLPNLTLAFSLILALFSLIGMPPTPGFYAKLFVLSAALQDNYVLETCAIVVCSVVATYYYANMIKVLFNSSTQKVTNFINPSLAFTMASATSLLFSFFMFMPSLSEGLYLITL</sequence>
<geneLocation type="mitochondrion"/>
<comment type="function">
    <text evidence="1">Core subunit of the mitochondrial membrane respiratory chain NADH dehydrogenase (Complex I) that is believed to belong to the minimal assembly required for catalysis. Complex I functions in the transfer of electrons from NADH to the respiratory chain. The immediate electron acceptor for the enzyme is believed to be ubiquinone (By similarity).</text>
</comment>
<comment type="catalytic activity">
    <reaction>
        <text>a ubiquinone + NADH + 5 H(+)(in) = a ubiquinol + NAD(+) + 4 H(+)(out)</text>
        <dbReference type="Rhea" id="RHEA:29091"/>
        <dbReference type="Rhea" id="RHEA-COMP:9565"/>
        <dbReference type="Rhea" id="RHEA-COMP:9566"/>
        <dbReference type="ChEBI" id="CHEBI:15378"/>
        <dbReference type="ChEBI" id="CHEBI:16389"/>
        <dbReference type="ChEBI" id="CHEBI:17976"/>
        <dbReference type="ChEBI" id="CHEBI:57540"/>
        <dbReference type="ChEBI" id="CHEBI:57945"/>
        <dbReference type="EC" id="7.1.1.2"/>
    </reaction>
</comment>
<comment type="subcellular location">
    <subcellularLocation>
        <location evidence="1">Mitochondrion inner membrane</location>
        <topology evidence="1">Multi-pass membrane protein</topology>
    </subcellularLocation>
</comment>
<comment type="similarity">
    <text evidence="3">Belongs to the complex I subunit 2 family.</text>
</comment>
<proteinExistence type="inferred from homology"/>
<protein>
    <recommendedName>
        <fullName>NADH-ubiquinone oxidoreductase chain 2</fullName>
        <ecNumber>7.1.1.2</ecNumber>
    </recommendedName>
    <alternativeName>
        <fullName>NADH dehydrogenase subunit 2</fullName>
    </alternativeName>
</protein>